<proteinExistence type="inferred from homology"/>
<sequence length="241" mass="26841">MATVSMRDMLQAGVHFGHQTRYWNPKMKPFIFGARNKVHIINLEKTVPMFNEALAELTKISSRKGKILFVGTKRAASEAVKEAANNCDQFFVNHRWLGGMLTNWKTVRQSIKRLKDLEIQSQDGTFDKLTKKEALMRTRELNKLENSLGGIKDMGGLPDALFVVDADHEHIAIKEANNLGIPVFSIVDTNSDPDGVDFIIPGNDDAIRAVKLYLGAVATAVREGRSQDLAVQAEESFVEAE</sequence>
<protein>
    <recommendedName>
        <fullName evidence="1">Small ribosomal subunit protein uS2</fullName>
    </recommendedName>
    <alternativeName>
        <fullName evidence="2">30S ribosomal protein S2</fullName>
    </alternativeName>
</protein>
<comment type="similarity">
    <text evidence="1">Belongs to the universal ribosomal protein uS2 family.</text>
</comment>
<evidence type="ECO:0000255" key="1">
    <source>
        <dbReference type="HAMAP-Rule" id="MF_00291"/>
    </source>
</evidence>
<evidence type="ECO:0000305" key="2"/>
<name>RS2_YERPA</name>
<reference key="1">
    <citation type="journal article" date="2006" name="J. Bacteriol.">
        <title>Complete genome sequence of Yersinia pestis strains Antiqua and Nepal516: evidence of gene reduction in an emerging pathogen.</title>
        <authorList>
            <person name="Chain P.S.G."/>
            <person name="Hu P."/>
            <person name="Malfatti S.A."/>
            <person name="Radnedge L."/>
            <person name="Larimer F."/>
            <person name="Vergez L.M."/>
            <person name="Worsham P."/>
            <person name="Chu M.C."/>
            <person name="Andersen G.L."/>
        </authorList>
    </citation>
    <scope>NUCLEOTIDE SEQUENCE [LARGE SCALE GENOMIC DNA]</scope>
    <source>
        <strain>Antiqua</strain>
    </source>
</reference>
<organism>
    <name type="scientific">Yersinia pestis bv. Antiqua (strain Antiqua)</name>
    <dbReference type="NCBI Taxonomy" id="360102"/>
    <lineage>
        <taxon>Bacteria</taxon>
        <taxon>Pseudomonadati</taxon>
        <taxon>Pseudomonadota</taxon>
        <taxon>Gammaproteobacteria</taxon>
        <taxon>Enterobacterales</taxon>
        <taxon>Yersiniaceae</taxon>
        <taxon>Yersinia</taxon>
    </lineage>
</organism>
<accession>Q1CAN6</accession>
<feature type="chain" id="PRO_1000004117" description="Small ribosomal subunit protein uS2">
    <location>
        <begin position="1"/>
        <end position="241"/>
    </location>
</feature>
<gene>
    <name evidence="1" type="primary">rpsB</name>
    <name type="ordered locus">YPA_0518</name>
</gene>
<keyword id="KW-0687">Ribonucleoprotein</keyword>
<keyword id="KW-0689">Ribosomal protein</keyword>
<dbReference type="EMBL" id="CP000308">
    <property type="protein sequence ID" value="ABG12486.1"/>
    <property type="molecule type" value="Genomic_DNA"/>
</dbReference>
<dbReference type="RefSeq" id="WP_002221800.1">
    <property type="nucleotide sequence ID" value="NZ_CP009906.1"/>
</dbReference>
<dbReference type="SMR" id="Q1CAN6"/>
<dbReference type="GeneID" id="57977517"/>
<dbReference type="KEGG" id="ypa:YPA_0518"/>
<dbReference type="Proteomes" id="UP000001971">
    <property type="component" value="Chromosome"/>
</dbReference>
<dbReference type="GO" id="GO:0022627">
    <property type="term" value="C:cytosolic small ribosomal subunit"/>
    <property type="evidence" value="ECO:0007669"/>
    <property type="project" value="TreeGrafter"/>
</dbReference>
<dbReference type="GO" id="GO:0003735">
    <property type="term" value="F:structural constituent of ribosome"/>
    <property type="evidence" value="ECO:0007669"/>
    <property type="project" value="InterPro"/>
</dbReference>
<dbReference type="GO" id="GO:0006412">
    <property type="term" value="P:translation"/>
    <property type="evidence" value="ECO:0007669"/>
    <property type="project" value="UniProtKB-UniRule"/>
</dbReference>
<dbReference type="CDD" id="cd01425">
    <property type="entry name" value="RPS2"/>
    <property type="match status" value="1"/>
</dbReference>
<dbReference type="FunFam" id="1.10.287.610:FF:000001">
    <property type="entry name" value="30S ribosomal protein S2"/>
    <property type="match status" value="1"/>
</dbReference>
<dbReference type="Gene3D" id="3.40.50.10490">
    <property type="entry name" value="Glucose-6-phosphate isomerase like protein, domain 1"/>
    <property type="match status" value="1"/>
</dbReference>
<dbReference type="Gene3D" id="1.10.287.610">
    <property type="entry name" value="Helix hairpin bin"/>
    <property type="match status" value="1"/>
</dbReference>
<dbReference type="HAMAP" id="MF_00291_B">
    <property type="entry name" value="Ribosomal_uS2_B"/>
    <property type="match status" value="1"/>
</dbReference>
<dbReference type="InterPro" id="IPR001865">
    <property type="entry name" value="Ribosomal_uS2"/>
</dbReference>
<dbReference type="InterPro" id="IPR005706">
    <property type="entry name" value="Ribosomal_uS2_bac/mit/plastid"/>
</dbReference>
<dbReference type="InterPro" id="IPR018130">
    <property type="entry name" value="Ribosomal_uS2_CS"/>
</dbReference>
<dbReference type="InterPro" id="IPR023591">
    <property type="entry name" value="Ribosomal_uS2_flav_dom_sf"/>
</dbReference>
<dbReference type="NCBIfam" id="TIGR01011">
    <property type="entry name" value="rpsB_bact"/>
    <property type="match status" value="1"/>
</dbReference>
<dbReference type="PANTHER" id="PTHR12534">
    <property type="entry name" value="30S RIBOSOMAL PROTEIN S2 PROKARYOTIC AND ORGANELLAR"/>
    <property type="match status" value="1"/>
</dbReference>
<dbReference type="PANTHER" id="PTHR12534:SF0">
    <property type="entry name" value="SMALL RIBOSOMAL SUBUNIT PROTEIN US2M"/>
    <property type="match status" value="1"/>
</dbReference>
<dbReference type="Pfam" id="PF00318">
    <property type="entry name" value="Ribosomal_S2"/>
    <property type="match status" value="1"/>
</dbReference>
<dbReference type="PRINTS" id="PR00395">
    <property type="entry name" value="RIBOSOMALS2"/>
</dbReference>
<dbReference type="SUPFAM" id="SSF52313">
    <property type="entry name" value="Ribosomal protein S2"/>
    <property type="match status" value="1"/>
</dbReference>
<dbReference type="PROSITE" id="PS00962">
    <property type="entry name" value="RIBOSOMAL_S2_1"/>
    <property type="match status" value="1"/>
</dbReference>
<dbReference type="PROSITE" id="PS00963">
    <property type="entry name" value="RIBOSOMAL_S2_2"/>
    <property type="match status" value="1"/>
</dbReference>